<feature type="chain" id="PRO_0000108682" description="Ribosomal RNA small subunit methyltransferase H">
    <location>
        <begin position="1"/>
        <end position="305"/>
    </location>
</feature>
<feature type="region of interest" description="Disordered" evidence="2">
    <location>
        <begin position="279"/>
        <end position="305"/>
    </location>
</feature>
<feature type="compositionally biased region" description="Basic residues" evidence="2">
    <location>
        <begin position="291"/>
        <end position="305"/>
    </location>
</feature>
<feature type="binding site" evidence="1">
    <location>
        <begin position="47"/>
        <end position="49"/>
    </location>
    <ligand>
        <name>S-adenosyl-L-methionine</name>
        <dbReference type="ChEBI" id="CHEBI:59789"/>
    </ligand>
</feature>
<feature type="binding site" evidence="1">
    <location>
        <position position="66"/>
    </location>
    <ligand>
        <name>S-adenosyl-L-methionine</name>
        <dbReference type="ChEBI" id="CHEBI:59789"/>
    </ligand>
</feature>
<feature type="binding site" evidence="1">
    <location>
        <position position="93"/>
    </location>
    <ligand>
        <name>S-adenosyl-L-methionine</name>
        <dbReference type="ChEBI" id="CHEBI:59789"/>
    </ligand>
</feature>
<feature type="binding site" evidence="1">
    <location>
        <position position="108"/>
    </location>
    <ligand>
        <name>S-adenosyl-L-methionine</name>
        <dbReference type="ChEBI" id="CHEBI:59789"/>
    </ligand>
</feature>
<feature type="binding site" evidence="1">
    <location>
        <position position="115"/>
    </location>
    <ligand>
        <name>S-adenosyl-L-methionine</name>
        <dbReference type="ChEBI" id="CHEBI:59789"/>
    </ligand>
</feature>
<name>RSMH_PROMA</name>
<accession>Q7VE18</accession>
<dbReference type="EC" id="2.1.1.199" evidence="1"/>
<dbReference type="EMBL" id="AE017126">
    <property type="protein sequence ID" value="AAP99242.1"/>
    <property type="molecule type" value="Genomic_DNA"/>
</dbReference>
<dbReference type="RefSeq" id="NP_874590.1">
    <property type="nucleotide sequence ID" value="NC_005042.1"/>
</dbReference>
<dbReference type="RefSeq" id="WP_011124351.1">
    <property type="nucleotide sequence ID" value="NC_005042.1"/>
</dbReference>
<dbReference type="SMR" id="Q7VE18"/>
<dbReference type="STRING" id="167539.Pro_0196"/>
<dbReference type="EnsemblBacteria" id="AAP99242">
    <property type="protein sequence ID" value="AAP99242"/>
    <property type="gene ID" value="Pro_0196"/>
</dbReference>
<dbReference type="KEGG" id="pma:Pro_0196"/>
<dbReference type="PATRIC" id="fig|167539.5.peg.203"/>
<dbReference type="eggNOG" id="COG0275">
    <property type="taxonomic scope" value="Bacteria"/>
</dbReference>
<dbReference type="HOGENOM" id="CLU_038422_3_0_3"/>
<dbReference type="OrthoDB" id="9806637at2"/>
<dbReference type="Proteomes" id="UP000001420">
    <property type="component" value="Chromosome"/>
</dbReference>
<dbReference type="GO" id="GO:0005737">
    <property type="term" value="C:cytoplasm"/>
    <property type="evidence" value="ECO:0007669"/>
    <property type="project" value="UniProtKB-SubCell"/>
</dbReference>
<dbReference type="GO" id="GO:0071424">
    <property type="term" value="F:rRNA (cytosine-N4-)-methyltransferase activity"/>
    <property type="evidence" value="ECO:0007669"/>
    <property type="project" value="UniProtKB-UniRule"/>
</dbReference>
<dbReference type="GO" id="GO:0070475">
    <property type="term" value="P:rRNA base methylation"/>
    <property type="evidence" value="ECO:0007669"/>
    <property type="project" value="UniProtKB-UniRule"/>
</dbReference>
<dbReference type="Gene3D" id="1.10.150.170">
    <property type="entry name" value="Putative methyltransferase TM0872, insert domain"/>
    <property type="match status" value="1"/>
</dbReference>
<dbReference type="Gene3D" id="3.40.50.150">
    <property type="entry name" value="Vaccinia Virus protein VP39"/>
    <property type="match status" value="1"/>
</dbReference>
<dbReference type="HAMAP" id="MF_01007">
    <property type="entry name" value="16SrRNA_methyltr_H"/>
    <property type="match status" value="1"/>
</dbReference>
<dbReference type="InterPro" id="IPR002903">
    <property type="entry name" value="RsmH"/>
</dbReference>
<dbReference type="InterPro" id="IPR023397">
    <property type="entry name" value="SAM-dep_MeTrfase_MraW_recog"/>
</dbReference>
<dbReference type="InterPro" id="IPR029063">
    <property type="entry name" value="SAM-dependent_MTases_sf"/>
</dbReference>
<dbReference type="NCBIfam" id="TIGR00006">
    <property type="entry name" value="16S rRNA (cytosine(1402)-N(4))-methyltransferase RsmH"/>
    <property type="match status" value="1"/>
</dbReference>
<dbReference type="PANTHER" id="PTHR11265:SF0">
    <property type="entry name" value="12S RRNA N4-METHYLCYTIDINE METHYLTRANSFERASE"/>
    <property type="match status" value="1"/>
</dbReference>
<dbReference type="PANTHER" id="PTHR11265">
    <property type="entry name" value="S-ADENOSYL-METHYLTRANSFERASE MRAW"/>
    <property type="match status" value="1"/>
</dbReference>
<dbReference type="Pfam" id="PF01795">
    <property type="entry name" value="Methyltransf_5"/>
    <property type="match status" value="1"/>
</dbReference>
<dbReference type="PIRSF" id="PIRSF004486">
    <property type="entry name" value="MraW"/>
    <property type="match status" value="1"/>
</dbReference>
<dbReference type="SUPFAM" id="SSF81799">
    <property type="entry name" value="Putative methyltransferase TM0872, insert domain"/>
    <property type="match status" value="1"/>
</dbReference>
<dbReference type="SUPFAM" id="SSF53335">
    <property type="entry name" value="S-adenosyl-L-methionine-dependent methyltransferases"/>
    <property type="match status" value="1"/>
</dbReference>
<proteinExistence type="inferred from homology"/>
<keyword id="KW-0963">Cytoplasm</keyword>
<keyword id="KW-0489">Methyltransferase</keyword>
<keyword id="KW-1185">Reference proteome</keyword>
<keyword id="KW-0698">rRNA processing</keyword>
<keyword id="KW-0949">S-adenosyl-L-methionine</keyword>
<keyword id="KW-0808">Transferase</keyword>
<gene>
    <name evidence="1" type="primary">rsmH</name>
    <name type="synonym">mraW</name>
    <name type="ordered locus">Pro_0196</name>
</gene>
<organism>
    <name type="scientific">Prochlorococcus marinus (strain SARG / CCMP1375 / SS120)</name>
    <dbReference type="NCBI Taxonomy" id="167539"/>
    <lineage>
        <taxon>Bacteria</taxon>
        <taxon>Bacillati</taxon>
        <taxon>Cyanobacteriota</taxon>
        <taxon>Cyanophyceae</taxon>
        <taxon>Synechococcales</taxon>
        <taxon>Prochlorococcaceae</taxon>
        <taxon>Prochlorococcus</taxon>
    </lineage>
</organism>
<reference key="1">
    <citation type="journal article" date="2003" name="Proc. Natl. Acad. Sci. U.S.A.">
        <title>Genome sequence of the cyanobacterium Prochlorococcus marinus SS120, a nearly minimal oxyphototrophic genome.</title>
        <authorList>
            <person name="Dufresne A."/>
            <person name="Salanoubat M."/>
            <person name="Partensky F."/>
            <person name="Artiguenave F."/>
            <person name="Axmann I.M."/>
            <person name="Barbe V."/>
            <person name="Duprat S."/>
            <person name="Galperin M.Y."/>
            <person name="Koonin E.V."/>
            <person name="Le Gall F."/>
            <person name="Makarova K.S."/>
            <person name="Ostrowski M."/>
            <person name="Oztas S."/>
            <person name="Robert C."/>
            <person name="Rogozin I.B."/>
            <person name="Scanlan D.J."/>
            <person name="Tandeau de Marsac N."/>
            <person name="Weissenbach J."/>
            <person name="Wincker P."/>
            <person name="Wolf Y.I."/>
            <person name="Hess W.R."/>
        </authorList>
    </citation>
    <scope>NUCLEOTIDE SEQUENCE [LARGE SCALE GENOMIC DNA]</scope>
    <source>
        <strain>SARG / CCMP1375 / SS120</strain>
    </source>
</reference>
<protein>
    <recommendedName>
        <fullName evidence="1">Ribosomal RNA small subunit methyltransferase H</fullName>
        <ecNumber evidence="1">2.1.1.199</ecNumber>
    </recommendedName>
    <alternativeName>
        <fullName evidence="1">16S rRNA m(4)C1402 methyltransferase</fullName>
    </alternativeName>
    <alternativeName>
        <fullName evidence="1">rRNA (cytosine-N(4)-)-methyltransferase RsmH</fullName>
    </alternativeName>
</protein>
<evidence type="ECO:0000255" key="1">
    <source>
        <dbReference type="HAMAP-Rule" id="MF_01007"/>
    </source>
</evidence>
<evidence type="ECO:0000256" key="2">
    <source>
        <dbReference type="SAM" id="MobiDB-lite"/>
    </source>
</evidence>
<comment type="function">
    <text evidence="1">Specifically methylates the N4 position of cytidine in position 1402 (C1402) of 16S rRNA.</text>
</comment>
<comment type="catalytic activity">
    <reaction evidence="1">
        <text>cytidine(1402) in 16S rRNA + S-adenosyl-L-methionine = N(4)-methylcytidine(1402) in 16S rRNA + S-adenosyl-L-homocysteine + H(+)</text>
        <dbReference type="Rhea" id="RHEA:42928"/>
        <dbReference type="Rhea" id="RHEA-COMP:10286"/>
        <dbReference type="Rhea" id="RHEA-COMP:10287"/>
        <dbReference type="ChEBI" id="CHEBI:15378"/>
        <dbReference type="ChEBI" id="CHEBI:57856"/>
        <dbReference type="ChEBI" id="CHEBI:59789"/>
        <dbReference type="ChEBI" id="CHEBI:74506"/>
        <dbReference type="ChEBI" id="CHEBI:82748"/>
        <dbReference type="EC" id="2.1.1.199"/>
    </reaction>
</comment>
<comment type="subcellular location">
    <subcellularLocation>
        <location evidence="1">Cytoplasm</location>
    </subcellularLocation>
</comment>
<comment type="similarity">
    <text evidence="1">Belongs to the methyltransferase superfamily. RsmH family.</text>
</comment>
<sequence length="305" mass="33870">MKEESKIVTSKFKHTPVLVNQVLEAIAKLPSELLIKGKLIDATIGGGGHSALILKGFPSLHITGLDQDPSAIDAASKQLLHFGSRAEIISSNFADFVPQEEVAFVLADLGVSSPQIDEAKRGFSFRLNGPLDMRMNPKKGLKADELLEKTEEKALADLIYKYGEEKFSRRIARRIKQDLSANGPYEGTSALAYAIAGCYPPKMRNGRIHPATRTFQALRIAINNELDALQHLLQKAPNWLLPGGVFAVISFHSLEDRLVKKSFLTDERLERITRKPIQADSNEKLNNPRSRSAKLRLAKKRNPNE</sequence>